<sequence length="388" mass="42607">MKNKDYPLRSSMDELSTKNDNEIDLEKGPLPEYNSEDGSTLPPYSEIWKYIKTVSEDSSTGPTEIANPNVERRQEFKDSHPNIYSLLRLLISVLAVIVVFFTAWVCVNPLEKSIFGKVAFSVTIGITCPIVFIAIFCFFETWTQAVAQCIKVTVIFLAQCVKVTAISLAQCVKVTAVFLAKCVKVTAVFLAKCVKVIAVGLYNSKKDLVVTIWLAWVVICFILFGCVKDGRLNLNKALICSTCSISAALFFILLLVCIPIWTLKHMLFGLFQVLGVQSCVVIVTKGLMYLFDKHIDATGYEIEASSLFVIGNFLFFYEMERPGALKRMPKFIGNGIASFLGGLGNAFGGIGNAFGGIGNAIGRIGNAFRGANDNNDIPLGEMDVESEV</sequence>
<evidence type="ECO:0000250" key="1">
    <source>
        <dbReference type="UniProtKB" id="A0A218N034"/>
    </source>
</evidence>
<evidence type="ECO:0000255" key="2"/>
<evidence type="ECO:0000256" key="3">
    <source>
        <dbReference type="SAM" id="MobiDB-lite"/>
    </source>
</evidence>
<evidence type="ECO:0000269" key="4">
    <source>
    </source>
</evidence>
<evidence type="ECO:0000269" key="5">
    <source>
    </source>
</evidence>
<evidence type="ECO:0000269" key="6">
    <source>
    </source>
</evidence>
<evidence type="ECO:0000303" key="7">
    <source>
    </source>
</evidence>
<evidence type="ECO:0000305" key="8"/>
<evidence type="ECO:0000312" key="9">
    <source>
        <dbReference type="PomBase" id="SPCC162.04c"/>
    </source>
</evidence>
<gene>
    <name evidence="9" type="primary">wtf13</name>
    <name type="synonym">wtf12</name>
    <name evidence="9" type="ORF">SPCC162.04c</name>
</gene>
<dbReference type="EMBL" id="CU329672">
    <property type="protein sequence ID" value="CAA19584.2"/>
    <property type="status" value="ALT_SEQ"/>
    <property type="molecule type" value="Genomic_DNA"/>
</dbReference>
<dbReference type="PIR" id="T41027">
    <property type="entry name" value="T41027"/>
</dbReference>
<dbReference type="BioGRID" id="275277">
    <property type="interactions" value="15"/>
</dbReference>
<dbReference type="STRING" id="284812.O74420"/>
<dbReference type="iPTMnet" id="O74420"/>
<dbReference type="PaxDb" id="4896-SPCC162.04c.1"/>
<dbReference type="EnsemblFungi" id="SPCC162.04c.1">
    <property type="protein sequence ID" value="SPCC162.04c.1:pep"/>
    <property type="gene ID" value="SPCC162.04c"/>
</dbReference>
<dbReference type="PomBase" id="SPCC162.04c">
    <property type="gene designation" value="wtf13"/>
</dbReference>
<dbReference type="VEuPathDB" id="FungiDB:SPCC162.04c"/>
<dbReference type="HOGENOM" id="CLU_763247_0_0_1"/>
<dbReference type="InParanoid" id="O74420"/>
<dbReference type="PhylomeDB" id="O74420"/>
<dbReference type="PRO" id="PR:O74420"/>
<dbReference type="Proteomes" id="UP000002485">
    <property type="component" value="Chromosome III"/>
</dbReference>
<dbReference type="GO" id="GO:0072324">
    <property type="term" value="C:ascus epiplasm"/>
    <property type="evidence" value="ECO:0007669"/>
    <property type="project" value="UniProtKB-SubCell"/>
</dbReference>
<dbReference type="GO" id="GO:0005737">
    <property type="term" value="C:cytoplasm"/>
    <property type="evidence" value="ECO:0000314"/>
    <property type="project" value="PomBase"/>
</dbReference>
<dbReference type="GO" id="GO:0005789">
    <property type="term" value="C:endoplasmic reticulum membrane"/>
    <property type="evidence" value="ECO:0007669"/>
    <property type="project" value="UniProtKB-SubCell"/>
</dbReference>
<dbReference type="GO" id="GO:0005774">
    <property type="term" value="C:vacuolar membrane"/>
    <property type="evidence" value="ECO:0007669"/>
    <property type="project" value="UniProtKB-SubCell"/>
</dbReference>
<dbReference type="GO" id="GO:0110134">
    <property type="term" value="P:meiotic drive"/>
    <property type="evidence" value="ECO:0000314"/>
    <property type="project" value="UniProtKB"/>
</dbReference>
<dbReference type="InterPro" id="IPR004982">
    <property type="entry name" value="WTF"/>
</dbReference>
<dbReference type="Pfam" id="PF03303">
    <property type="entry name" value="WTF"/>
    <property type="match status" value="2"/>
</dbReference>
<reference key="1">
    <citation type="journal article" date="2002" name="Nature">
        <title>The genome sequence of Schizosaccharomyces pombe.</title>
        <authorList>
            <person name="Wood V."/>
            <person name="Gwilliam R."/>
            <person name="Rajandream M.A."/>
            <person name="Lyne M.H."/>
            <person name="Lyne R."/>
            <person name="Stewart A."/>
            <person name="Sgouros J.G."/>
            <person name="Peat N."/>
            <person name="Hayles J."/>
            <person name="Baker S.G."/>
            <person name="Basham D."/>
            <person name="Bowman S."/>
            <person name="Brooks K."/>
            <person name="Brown D."/>
            <person name="Brown S."/>
            <person name="Chillingworth T."/>
            <person name="Churcher C.M."/>
            <person name="Collins M."/>
            <person name="Connor R."/>
            <person name="Cronin A."/>
            <person name="Davis P."/>
            <person name="Feltwell T."/>
            <person name="Fraser A."/>
            <person name="Gentles S."/>
            <person name="Goble A."/>
            <person name="Hamlin N."/>
            <person name="Harris D.E."/>
            <person name="Hidalgo J."/>
            <person name="Hodgson G."/>
            <person name="Holroyd S."/>
            <person name="Hornsby T."/>
            <person name="Howarth S."/>
            <person name="Huckle E.J."/>
            <person name="Hunt S."/>
            <person name="Jagels K."/>
            <person name="James K.D."/>
            <person name="Jones L."/>
            <person name="Jones M."/>
            <person name="Leather S."/>
            <person name="McDonald S."/>
            <person name="McLean J."/>
            <person name="Mooney P."/>
            <person name="Moule S."/>
            <person name="Mungall K.L."/>
            <person name="Murphy L.D."/>
            <person name="Niblett D."/>
            <person name="Odell C."/>
            <person name="Oliver K."/>
            <person name="O'Neil S."/>
            <person name="Pearson D."/>
            <person name="Quail M.A."/>
            <person name="Rabbinowitsch E."/>
            <person name="Rutherford K.M."/>
            <person name="Rutter S."/>
            <person name="Saunders D."/>
            <person name="Seeger K."/>
            <person name="Sharp S."/>
            <person name="Skelton J."/>
            <person name="Simmonds M.N."/>
            <person name="Squares R."/>
            <person name="Squares S."/>
            <person name="Stevens K."/>
            <person name="Taylor K."/>
            <person name="Taylor R.G."/>
            <person name="Tivey A."/>
            <person name="Walsh S.V."/>
            <person name="Warren T."/>
            <person name="Whitehead S."/>
            <person name="Woodward J.R."/>
            <person name="Volckaert G."/>
            <person name="Aert R."/>
            <person name="Robben J."/>
            <person name="Grymonprez B."/>
            <person name="Weltjens I."/>
            <person name="Vanstreels E."/>
            <person name="Rieger M."/>
            <person name="Schaefer M."/>
            <person name="Mueller-Auer S."/>
            <person name="Gabel C."/>
            <person name="Fuchs M."/>
            <person name="Duesterhoeft A."/>
            <person name="Fritzc C."/>
            <person name="Holzer E."/>
            <person name="Moestl D."/>
            <person name="Hilbert H."/>
            <person name="Borzym K."/>
            <person name="Langer I."/>
            <person name="Beck A."/>
            <person name="Lehrach H."/>
            <person name="Reinhardt R."/>
            <person name="Pohl T.M."/>
            <person name="Eger P."/>
            <person name="Zimmermann W."/>
            <person name="Wedler H."/>
            <person name="Wambutt R."/>
            <person name="Purnelle B."/>
            <person name="Goffeau A."/>
            <person name="Cadieu E."/>
            <person name="Dreano S."/>
            <person name="Gloux S."/>
            <person name="Lelaure V."/>
            <person name="Mottier S."/>
            <person name="Galibert F."/>
            <person name="Aves S.J."/>
            <person name="Xiang Z."/>
            <person name="Hunt C."/>
            <person name="Moore K."/>
            <person name="Hurst S.M."/>
            <person name="Lucas M."/>
            <person name="Rochet M."/>
            <person name="Gaillardin C."/>
            <person name="Tallada V.A."/>
            <person name="Garzon A."/>
            <person name="Thode G."/>
            <person name="Daga R.R."/>
            <person name="Cruzado L."/>
            <person name="Jimenez J."/>
            <person name="Sanchez M."/>
            <person name="del Rey F."/>
            <person name="Benito J."/>
            <person name="Dominguez A."/>
            <person name="Revuelta J.L."/>
            <person name="Moreno S."/>
            <person name="Armstrong J."/>
            <person name="Forsburg S.L."/>
            <person name="Cerutti L."/>
            <person name="Lowe T."/>
            <person name="McCombie W.R."/>
            <person name="Paulsen I."/>
            <person name="Potashkin J."/>
            <person name="Shpakovski G.V."/>
            <person name="Ussery D."/>
            <person name="Barrell B.G."/>
            <person name="Nurse P."/>
        </authorList>
    </citation>
    <scope>NUCLEOTIDE SEQUENCE [LARGE SCALE GENOMIC DNA]</scope>
    <source>
        <strain>972 / ATCC 24843</strain>
    </source>
</reference>
<reference key="2">
    <citation type="journal article" date="2018" name="PLoS Genet.">
        <title>A suppressor of a wtf poison-antidote meiotic driver acts via mimicry of the driver's antidote.</title>
        <authorList>
            <person name="Bravo Nunez M.A."/>
            <person name="Lange J.J."/>
            <person name="Zanders S.E."/>
        </authorList>
    </citation>
    <scope>REVISION OF GENE MODEL</scope>
    <scope>FUNCTION</scope>
    <scope>INTERACTION OF ISOFORMS 1 AND 2</scope>
    <scope>SUBCELLULAR LOCATION (ISOFORMS 1 AND 2)</scope>
    <scope>ALTERNATIVE INITIATION (ISOFORMS 1 AND 2)</scope>
</reference>
<reference key="3">
    <citation type="journal article" date="2020" name="Elife">
        <title>Atypical meiosis can be adaptive in outcrossed Schizosaccharomyces pombe due to wtf meiotic drivers.</title>
        <authorList>
            <person name="Bravo Nunez M.A."/>
            <person name="Sabbarini I.M."/>
            <person name="Eide L.E."/>
            <person name="Unckless R.L."/>
            <person name="Zanders S.E."/>
        </authorList>
    </citation>
    <scope>FUNCTION</scope>
</reference>
<reference key="4">
    <citation type="journal article" date="2020" name="PLoS Genet.">
        <title>Dramatically diverse Schizosaccharomyces pombe wtf meiotic drivers all display high gamete-killing efficiency.</title>
        <authorList>
            <person name="Bravo Nunez M.A."/>
            <person name="Sabbarini I.M."/>
            <person name="Eickbush M.T."/>
            <person name="Liang Y."/>
            <person name="Lange J.J."/>
            <person name="Kent A.M."/>
            <person name="Zanders S.E."/>
        </authorList>
    </citation>
    <scope>FUNCTION (ISOFORM 1)</scope>
    <scope>SUBCELLULAR LOCATION</scope>
</reference>
<organism>
    <name type="scientific">Schizosaccharomyces pombe (strain 972 / ATCC 24843)</name>
    <name type="common">Fission yeast</name>
    <dbReference type="NCBI Taxonomy" id="284812"/>
    <lineage>
        <taxon>Eukaryota</taxon>
        <taxon>Fungi</taxon>
        <taxon>Dikarya</taxon>
        <taxon>Ascomycota</taxon>
        <taxon>Taphrinomycotina</taxon>
        <taxon>Schizosaccharomycetes</taxon>
        <taxon>Schizosaccharomycetales</taxon>
        <taxon>Schizosaccharomycetaceae</taxon>
        <taxon>Schizosaccharomyces</taxon>
    </lineage>
</organism>
<keyword id="KW-0024">Alternative initiation</keyword>
<keyword id="KW-0963">Cytoplasm</keyword>
<keyword id="KW-0256">Endoplasmic reticulum</keyword>
<keyword id="KW-0472">Membrane</keyword>
<keyword id="KW-1185">Reference proteome</keyword>
<keyword id="KW-0800">Toxin</keyword>
<keyword id="KW-0812">Transmembrane</keyword>
<keyword id="KW-1133">Transmembrane helix</keyword>
<keyword id="KW-0926">Vacuole</keyword>
<accession>O74420</accession>
<feature type="chain" id="PRO_0000193227" description="Meiotic driver wtf13">
    <location>
        <begin position="1"/>
        <end position="388"/>
    </location>
</feature>
<feature type="transmembrane region" description="Helical" evidence="2">
    <location>
        <begin position="89"/>
        <end position="109"/>
    </location>
</feature>
<feature type="transmembrane region" description="Helical" evidence="2">
    <location>
        <begin position="119"/>
        <end position="139"/>
    </location>
</feature>
<feature type="transmembrane region" description="Helical" evidence="2">
    <location>
        <begin position="152"/>
        <end position="172"/>
    </location>
</feature>
<feature type="transmembrane region" description="Helical" evidence="2">
    <location>
        <begin position="182"/>
        <end position="202"/>
    </location>
</feature>
<feature type="transmembrane region" description="Helical" evidence="2">
    <location>
        <begin position="207"/>
        <end position="227"/>
    </location>
</feature>
<feature type="transmembrane region" description="Helical" evidence="2">
    <location>
        <begin position="243"/>
        <end position="263"/>
    </location>
</feature>
<feature type="transmembrane region" description="Helical" evidence="2">
    <location>
        <begin position="267"/>
        <end position="287"/>
    </location>
</feature>
<feature type="transmembrane region" description="Helical" evidence="2">
    <location>
        <begin position="297"/>
        <end position="317"/>
    </location>
</feature>
<feature type="transmembrane region" description="Helical" evidence="2">
    <location>
        <begin position="331"/>
        <end position="351"/>
    </location>
</feature>
<feature type="region of interest" description="Disordered" evidence="3">
    <location>
        <begin position="1"/>
        <end position="39"/>
    </location>
</feature>
<feature type="compositionally biased region" description="Basic and acidic residues" evidence="3">
    <location>
        <begin position="1"/>
        <end position="29"/>
    </location>
</feature>
<feature type="splice variant" id="VSP_060943" description="In isoform 2." evidence="4">
    <original>MKNKDYPLRSSMDELSTKNDNEIDLEKGPLPEYNSEDGSTLPPY</original>
    <variation>ML</variation>
    <location>
        <begin position="1"/>
        <end position="44"/>
    </location>
</feature>
<name>WTF13_SCHPO</name>
<protein>
    <recommendedName>
        <fullName evidence="7">Meiotic driver wtf13</fullName>
    </recommendedName>
</protein>
<proteinExistence type="evidence at protein level"/>
<comment type="function">
    <text evidence="4 5 6">Promotes unequal transmission of alleles from the parental zygote to progeny spores by acting as poison/antidote system where the poison and antidote proteins are produced from the same locus; the poison component is trans-acting and targets all spores within an ascus whereas the antidote component is spore-specific, leading to poisoning of all progeny that do not inherit the allele.</text>
</comment>
<comment type="function">
    <molecule>Isoform 1</molecule>
    <text evidence="1 5">Localizes isoform 2 to the vacuole thereby facilitating its degradation (By similarity). In addition to suppressing isoform 2, also suppresses S.pombe strain FY29033 wtf18 isoform 2 (PubMed:32032353).</text>
</comment>
<comment type="function">
    <molecule>Isoform 2</molecule>
    <text evidence="1">Forms toxic aggregates that disrupt spore maturation.</text>
</comment>
<comment type="subunit">
    <text evidence="1 4">Homomer (By similarity). Forms protein aggregates (By similarity). The two isoforms can interact with each other and with themselves (By similarity). High sequence similarity is required for their interaction (PubMed:30475921).</text>
</comment>
<comment type="subcellular location">
    <molecule>Isoform 1</molecule>
    <subcellularLocation>
        <location evidence="2 4 5">Spore membrane</location>
        <topology evidence="2">Multi-pass membrane protein</topology>
    </subcellularLocation>
    <subcellularLocation>
        <location evidence="1 2">Vacuole membrane</location>
        <topology evidence="2">Multi-pass membrane protein</topology>
    </subcellularLocation>
    <text evidence="1">Contained within spores expressing the isoform and localizes isoform 2 to the vacuole.</text>
</comment>
<comment type="subcellular location">
    <molecule>Isoform 2</molecule>
    <subcellularLocation>
        <location evidence="4">Ascus epiplasm</location>
    </subcellularLocation>
    <subcellularLocation>
        <location evidence="1">Cytoplasm</location>
    </subcellularLocation>
    <subcellularLocation>
        <location evidence="2 4 5">Spore membrane</location>
        <topology evidence="2">Multi-pass membrane protein</topology>
    </subcellularLocation>
    <subcellularLocation>
        <location evidence="1 2">Vacuole membrane</location>
        <topology evidence="2">Multi-pass membrane protein</topology>
    </subcellularLocation>
    <subcellularLocation>
        <location evidence="1 2">Endoplasmic reticulum membrane</location>
        <topology evidence="2">Multi-pass membrane protein</topology>
    </subcellularLocation>
    <text evidence="1">Localizes in trans to all spores within an ascus. Localization to the spore vacuole is dependent on isoform 1.</text>
</comment>
<comment type="alternative products">
    <event type="alternative initiation"/>
    <isoform>
        <id>O74420-1</id>
        <name>1</name>
        <name evidence="7">Antidote</name>
        <name evidence="8">Suppressor</name>
        <sequence type="displayed"/>
    </isoform>
    <isoform>
        <id>O74420-2</id>
        <name>2</name>
        <name evidence="7">Poison</name>
        <sequence type="described" ref="VSP_060943"/>
    </isoform>
</comment>
<comment type="similarity">
    <text evidence="8">Belongs to the WTF family.</text>
</comment>
<comment type="sequence caution" evidence="8">
    <conflict type="erroneous gene model prediction">
        <sequence resource="EMBL-CDS" id="CAA19584"/>
    </conflict>
</comment>